<organism>
    <name type="scientific">Salmonella choleraesuis (strain SC-B67)</name>
    <dbReference type="NCBI Taxonomy" id="321314"/>
    <lineage>
        <taxon>Bacteria</taxon>
        <taxon>Pseudomonadati</taxon>
        <taxon>Pseudomonadota</taxon>
        <taxon>Gammaproteobacteria</taxon>
        <taxon>Enterobacterales</taxon>
        <taxon>Enterobacteriaceae</taxon>
        <taxon>Salmonella</taxon>
    </lineage>
</organism>
<sequence>MPIRVLDELPAVNFLREENVFVMTTSRASGQEIRPLKVLILNLMPKKIETENQFLRLLSNSPLQVDIQLLRIDARESRNTPAEHLNNFYCNFDDICDQNFDGLIVTGAPLGLVEFNDVAYWPQIRQVLEWAKDHVTSTLFVCWAVQAALNILYGIPKQTRTDKLSGVYEHHILHPHALLTRGFDDSFLAPHSRYADFPAALIRDYTDLEILAETEEGDAYLFASKDKRIAFVTGHPEYDAHTLAGEYFRDVEAGLNPEVPYNYFPKNDPQNIPRATWRSHGNLLFTNWLNYYVYQITPYDLRHMNPTLD</sequence>
<feature type="chain" id="PRO_1000021830" description="Homoserine O-succinyltransferase">
    <location>
        <begin position="1"/>
        <end position="309"/>
    </location>
</feature>
<feature type="active site" description="Acyl-thioester intermediate" evidence="1">
    <location>
        <position position="142"/>
    </location>
</feature>
<feature type="active site" description="Proton acceptor" evidence="1">
    <location>
        <position position="235"/>
    </location>
</feature>
<feature type="active site" evidence="1">
    <location>
        <position position="237"/>
    </location>
</feature>
<feature type="binding site" evidence="1">
    <location>
        <position position="163"/>
    </location>
    <ligand>
        <name>substrate</name>
    </ligand>
</feature>
<feature type="binding site" evidence="1">
    <location>
        <position position="192"/>
    </location>
    <ligand>
        <name>substrate</name>
    </ligand>
</feature>
<feature type="binding site" evidence="1">
    <location>
        <position position="249"/>
    </location>
    <ligand>
        <name>substrate</name>
    </ligand>
</feature>
<feature type="site" description="Important for acyl-CoA specificity" evidence="1">
    <location>
        <position position="111"/>
    </location>
</feature>
<feature type="site" description="Important for substrate specificity" evidence="1">
    <location>
        <position position="192"/>
    </location>
</feature>
<accession>Q57H45</accession>
<dbReference type="EC" id="2.3.1.46" evidence="1"/>
<dbReference type="EMBL" id="AE017220">
    <property type="protein sequence ID" value="AAX67967.1"/>
    <property type="molecule type" value="Genomic_DNA"/>
</dbReference>
<dbReference type="SMR" id="Q57H45"/>
<dbReference type="KEGG" id="sec:SCH_4061"/>
<dbReference type="HOGENOM" id="CLU_057851_0_1_6"/>
<dbReference type="UniPathway" id="UPA00051">
    <property type="reaction ID" value="UER00075"/>
</dbReference>
<dbReference type="Proteomes" id="UP000000538">
    <property type="component" value="Chromosome"/>
</dbReference>
<dbReference type="GO" id="GO:0005737">
    <property type="term" value="C:cytoplasm"/>
    <property type="evidence" value="ECO:0007669"/>
    <property type="project" value="UniProtKB-SubCell"/>
</dbReference>
<dbReference type="GO" id="GO:0004414">
    <property type="term" value="F:homoserine O-acetyltransferase activity"/>
    <property type="evidence" value="ECO:0007669"/>
    <property type="project" value="UniProtKB-UniRule"/>
</dbReference>
<dbReference type="GO" id="GO:0008899">
    <property type="term" value="F:homoserine O-succinyltransferase activity"/>
    <property type="evidence" value="ECO:0007669"/>
    <property type="project" value="UniProtKB-EC"/>
</dbReference>
<dbReference type="GO" id="GO:0019281">
    <property type="term" value="P:L-methionine biosynthetic process from homoserine via O-succinyl-L-homoserine and cystathionine"/>
    <property type="evidence" value="ECO:0007669"/>
    <property type="project" value="InterPro"/>
</dbReference>
<dbReference type="CDD" id="cd03131">
    <property type="entry name" value="GATase1_HTS"/>
    <property type="match status" value="1"/>
</dbReference>
<dbReference type="FunFam" id="3.40.50.880:FF:000004">
    <property type="entry name" value="Homoserine O-succinyltransferase"/>
    <property type="match status" value="1"/>
</dbReference>
<dbReference type="Gene3D" id="3.40.50.880">
    <property type="match status" value="1"/>
</dbReference>
<dbReference type="HAMAP" id="MF_00295">
    <property type="entry name" value="MetA_acyltransf"/>
    <property type="match status" value="1"/>
</dbReference>
<dbReference type="InterPro" id="IPR029062">
    <property type="entry name" value="Class_I_gatase-like"/>
</dbReference>
<dbReference type="InterPro" id="IPR005697">
    <property type="entry name" value="HST_MetA"/>
</dbReference>
<dbReference type="InterPro" id="IPR033752">
    <property type="entry name" value="MetA_family"/>
</dbReference>
<dbReference type="NCBIfam" id="TIGR01001">
    <property type="entry name" value="metA"/>
    <property type="match status" value="1"/>
</dbReference>
<dbReference type="PANTHER" id="PTHR20919">
    <property type="entry name" value="HOMOSERINE O-SUCCINYLTRANSFERASE"/>
    <property type="match status" value="1"/>
</dbReference>
<dbReference type="PANTHER" id="PTHR20919:SF0">
    <property type="entry name" value="HOMOSERINE O-SUCCINYLTRANSFERASE"/>
    <property type="match status" value="1"/>
</dbReference>
<dbReference type="Pfam" id="PF04204">
    <property type="entry name" value="HTS"/>
    <property type="match status" value="1"/>
</dbReference>
<dbReference type="PIRSF" id="PIRSF000450">
    <property type="entry name" value="H_ser_succinyltr"/>
    <property type="match status" value="1"/>
</dbReference>
<dbReference type="SUPFAM" id="SSF52317">
    <property type="entry name" value="Class I glutamine amidotransferase-like"/>
    <property type="match status" value="1"/>
</dbReference>
<proteinExistence type="inferred from homology"/>
<gene>
    <name evidence="1" type="primary">metAS</name>
    <name type="ordered locus">SCH_4061</name>
</gene>
<comment type="function">
    <text evidence="1">Transfers a succinyl group from succinyl-CoA to L-homoserine, forming succinyl-L-homoserine.</text>
</comment>
<comment type="catalytic activity">
    <reaction evidence="1">
        <text>L-homoserine + succinyl-CoA = O-succinyl-L-homoserine + CoA</text>
        <dbReference type="Rhea" id="RHEA:22008"/>
        <dbReference type="ChEBI" id="CHEBI:57287"/>
        <dbReference type="ChEBI" id="CHEBI:57292"/>
        <dbReference type="ChEBI" id="CHEBI:57476"/>
        <dbReference type="ChEBI" id="CHEBI:57661"/>
        <dbReference type="EC" id="2.3.1.46"/>
    </reaction>
</comment>
<comment type="pathway">
    <text evidence="1">Amino-acid biosynthesis; L-methionine biosynthesis via de novo pathway; O-succinyl-L-homoserine from L-homoserine: step 1/1.</text>
</comment>
<comment type="subunit">
    <text evidence="1">Homodimer.</text>
</comment>
<comment type="subcellular location">
    <subcellularLocation>
        <location evidence="1">Cytoplasm</location>
    </subcellularLocation>
</comment>
<comment type="similarity">
    <text evidence="1">Belongs to the MetA family.</text>
</comment>
<protein>
    <recommendedName>
        <fullName evidence="1">Homoserine O-succinyltransferase</fullName>
        <shortName evidence="1">HST</shortName>
        <ecNumber evidence="1">2.3.1.46</ecNumber>
    </recommendedName>
    <alternativeName>
        <fullName evidence="1">Homoserine transsuccinylase</fullName>
        <shortName evidence="1">HTS</shortName>
    </alternativeName>
</protein>
<keyword id="KW-0012">Acyltransferase</keyword>
<keyword id="KW-0028">Amino-acid biosynthesis</keyword>
<keyword id="KW-0963">Cytoplasm</keyword>
<keyword id="KW-0486">Methionine biosynthesis</keyword>
<keyword id="KW-0808">Transferase</keyword>
<evidence type="ECO:0000255" key="1">
    <source>
        <dbReference type="HAMAP-Rule" id="MF_00295"/>
    </source>
</evidence>
<name>METAS_SALCH</name>
<reference key="1">
    <citation type="journal article" date="2005" name="Nucleic Acids Res.">
        <title>The genome sequence of Salmonella enterica serovar Choleraesuis, a highly invasive and resistant zoonotic pathogen.</title>
        <authorList>
            <person name="Chiu C.-H."/>
            <person name="Tang P."/>
            <person name="Chu C."/>
            <person name="Hu S."/>
            <person name="Bao Q."/>
            <person name="Yu J."/>
            <person name="Chou Y.-Y."/>
            <person name="Wang H.-S."/>
            <person name="Lee Y.-S."/>
        </authorList>
    </citation>
    <scope>NUCLEOTIDE SEQUENCE [LARGE SCALE GENOMIC DNA]</scope>
    <source>
        <strain>SC-B67</strain>
    </source>
</reference>